<proteinExistence type="inferred from homology"/>
<reference key="1">
    <citation type="journal article" date="2006" name="Proc. Natl. Acad. Sci. U.S.A.">
        <title>The complete genome sequence of a chronic atrophic gastritis Helicobacter pylori strain: evolution during disease progression.</title>
        <authorList>
            <person name="Oh J.D."/>
            <person name="Kling-Baeckhed H."/>
            <person name="Giannakis M."/>
            <person name="Xu J."/>
            <person name="Fulton R.S."/>
            <person name="Fulton L.A."/>
            <person name="Cordum H.S."/>
            <person name="Wang C."/>
            <person name="Elliott G."/>
            <person name="Edwards J."/>
            <person name="Mardis E.R."/>
            <person name="Engstrand L.G."/>
            <person name="Gordon J.I."/>
        </authorList>
    </citation>
    <scope>NUCLEOTIDE SEQUENCE [LARGE SCALE GENOMIC DNA]</scope>
    <source>
        <strain>HPAG1</strain>
    </source>
</reference>
<sequence length="135" mass="15578">MNYFLKAPILGFEHINEVRLEKIDSLFSRLMGQTNSPMALDMVLVNPYCLREYSFVIPKYIELLLELDSHSKVEVYCVVVLQKNLEDSMVNFLAPLVFNSKNGFGAQVALSMMDYPDFGFRDPLKSFVVKERERA</sequence>
<accession>Q1CSB2</accession>
<feature type="chain" id="PRO_0000272995" description="Flagellar assembly factor FliW 1">
    <location>
        <begin position="1"/>
        <end position="135"/>
    </location>
</feature>
<dbReference type="EMBL" id="CP000241">
    <property type="protein sequence ID" value="ABF85160.1"/>
    <property type="molecule type" value="Genomic_DNA"/>
</dbReference>
<dbReference type="SMR" id="Q1CSB2"/>
<dbReference type="KEGG" id="hpa:HPAG1_1093"/>
<dbReference type="HOGENOM" id="CLU_112356_2_1_7"/>
<dbReference type="GO" id="GO:0005737">
    <property type="term" value="C:cytoplasm"/>
    <property type="evidence" value="ECO:0007669"/>
    <property type="project" value="UniProtKB-SubCell"/>
</dbReference>
<dbReference type="GO" id="GO:0044780">
    <property type="term" value="P:bacterial-type flagellum assembly"/>
    <property type="evidence" value="ECO:0007669"/>
    <property type="project" value="UniProtKB-UniRule"/>
</dbReference>
<dbReference type="GO" id="GO:0006417">
    <property type="term" value="P:regulation of translation"/>
    <property type="evidence" value="ECO:0007669"/>
    <property type="project" value="UniProtKB-KW"/>
</dbReference>
<dbReference type="Gene3D" id="2.30.290.10">
    <property type="entry name" value="BH3618-like"/>
    <property type="match status" value="1"/>
</dbReference>
<dbReference type="HAMAP" id="MF_01185">
    <property type="entry name" value="FliW"/>
    <property type="match status" value="1"/>
</dbReference>
<dbReference type="InterPro" id="IPR003775">
    <property type="entry name" value="Flagellar_assembly_factor_FliW"/>
</dbReference>
<dbReference type="InterPro" id="IPR024046">
    <property type="entry name" value="Flagellar_assmbl_FliW_dom_sf"/>
</dbReference>
<dbReference type="NCBIfam" id="NF009791">
    <property type="entry name" value="PRK13283.1"/>
    <property type="match status" value="1"/>
</dbReference>
<dbReference type="PANTHER" id="PTHR39190">
    <property type="entry name" value="FLAGELLAR ASSEMBLY FACTOR FLIW"/>
    <property type="match status" value="1"/>
</dbReference>
<dbReference type="PANTHER" id="PTHR39190:SF1">
    <property type="entry name" value="FLAGELLAR ASSEMBLY FACTOR FLIW"/>
    <property type="match status" value="1"/>
</dbReference>
<dbReference type="Pfam" id="PF02623">
    <property type="entry name" value="FliW"/>
    <property type="match status" value="1"/>
</dbReference>
<dbReference type="SUPFAM" id="SSF141457">
    <property type="entry name" value="BH3618-like"/>
    <property type="match status" value="1"/>
</dbReference>
<name>FLIW1_HELPH</name>
<organism>
    <name type="scientific">Helicobacter pylori (strain HPAG1)</name>
    <dbReference type="NCBI Taxonomy" id="357544"/>
    <lineage>
        <taxon>Bacteria</taxon>
        <taxon>Pseudomonadati</taxon>
        <taxon>Campylobacterota</taxon>
        <taxon>Epsilonproteobacteria</taxon>
        <taxon>Campylobacterales</taxon>
        <taxon>Helicobacteraceae</taxon>
        <taxon>Helicobacter</taxon>
    </lineage>
</organism>
<comment type="function">
    <text evidence="1">Acts as an anti-CsrA protein, binds CsrA and prevents it from repressing translation of its target genes, one of which is flagellin. Binds to flagellin and participates in the assembly of the flagellum.</text>
</comment>
<comment type="subunit">
    <text evidence="1">Interacts with translational regulator CsrA and flagellin(s).</text>
</comment>
<comment type="subcellular location">
    <subcellularLocation>
        <location evidence="1">Cytoplasm</location>
    </subcellularLocation>
</comment>
<comment type="similarity">
    <text evidence="1">Belongs to the FliW family.</text>
</comment>
<keyword id="KW-1005">Bacterial flagellum biogenesis</keyword>
<keyword id="KW-0143">Chaperone</keyword>
<keyword id="KW-0963">Cytoplasm</keyword>
<keyword id="KW-0810">Translation regulation</keyword>
<protein>
    <recommendedName>
        <fullName evidence="1">Flagellar assembly factor FliW 1</fullName>
    </recommendedName>
</protein>
<evidence type="ECO:0000255" key="1">
    <source>
        <dbReference type="HAMAP-Rule" id="MF_01185"/>
    </source>
</evidence>
<gene>
    <name evidence="1" type="primary">fliW1</name>
    <name type="ordered locus">HPAG1_1093</name>
</gene>